<proteinExistence type="inferred from homology"/>
<name>RL21_CHLPB</name>
<gene>
    <name evidence="1" type="primary">rplU</name>
    <name type="ordered locus">Cphamn1_0834</name>
</gene>
<keyword id="KW-0687">Ribonucleoprotein</keyword>
<keyword id="KW-0689">Ribosomal protein</keyword>
<keyword id="KW-0694">RNA-binding</keyword>
<keyword id="KW-0699">rRNA-binding</keyword>
<reference key="1">
    <citation type="submission" date="2008-06" db="EMBL/GenBank/DDBJ databases">
        <title>Complete sequence of Chlorobium phaeobacteroides BS1.</title>
        <authorList>
            <consortium name="US DOE Joint Genome Institute"/>
            <person name="Lucas S."/>
            <person name="Copeland A."/>
            <person name="Lapidus A."/>
            <person name="Glavina del Rio T."/>
            <person name="Dalin E."/>
            <person name="Tice H."/>
            <person name="Bruce D."/>
            <person name="Goodwin L."/>
            <person name="Pitluck S."/>
            <person name="Schmutz J."/>
            <person name="Larimer F."/>
            <person name="Land M."/>
            <person name="Hauser L."/>
            <person name="Kyrpides N."/>
            <person name="Ovchinnikova G."/>
            <person name="Li T."/>
            <person name="Liu Z."/>
            <person name="Zhao F."/>
            <person name="Overmann J."/>
            <person name="Bryant D.A."/>
            <person name="Richardson P."/>
        </authorList>
    </citation>
    <scope>NUCLEOTIDE SEQUENCE [LARGE SCALE GENOMIC DNA]</scope>
    <source>
        <strain>BS1</strain>
    </source>
</reference>
<sequence>MQALIQISDKQYLVKTGDKLFIPHQNAEVGNVIDLKPLAQIDQEKTSIEPSGNVQLKVLEHLKDEKVIVFKKKRRKRYQKRNGHRQLMTQVEVLSM</sequence>
<dbReference type="EMBL" id="CP001101">
    <property type="protein sequence ID" value="ACE03785.1"/>
    <property type="molecule type" value="Genomic_DNA"/>
</dbReference>
<dbReference type="SMR" id="B3EP08"/>
<dbReference type="STRING" id="331678.Cphamn1_0834"/>
<dbReference type="KEGG" id="cpb:Cphamn1_0834"/>
<dbReference type="eggNOG" id="COG0261">
    <property type="taxonomic scope" value="Bacteria"/>
</dbReference>
<dbReference type="HOGENOM" id="CLU_061463_3_2_10"/>
<dbReference type="OrthoDB" id="9813334at2"/>
<dbReference type="GO" id="GO:0005737">
    <property type="term" value="C:cytoplasm"/>
    <property type="evidence" value="ECO:0007669"/>
    <property type="project" value="UniProtKB-ARBA"/>
</dbReference>
<dbReference type="GO" id="GO:1990904">
    <property type="term" value="C:ribonucleoprotein complex"/>
    <property type="evidence" value="ECO:0007669"/>
    <property type="project" value="UniProtKB-KW"/>
</dbReference>
<dbReference type="GO" id="GO:0005840">
    <property type="term" value="C:ribosome"/>
    <property type="evidence" value="ECO:0007669"/>
    <property type="project" value="UniProtKB-KW"/>
</dbReference>
<dbReference type="GO" id="GO:0019843">
    <property type="term" value="F:rRNA binding"/>
    <property type="evidence" value="ECO:0007669"/>
    <property type="project" value="UniProtKB-UniRule"/>
</dbReference>
<dbReference type="GO" id="GO:0003735">
    <property type="term" value="F:structural constituent of ribosome"/>
    <property type="evidence" value="ECO:0007669"/>
    <property type="project" value="InterPro"/>
</dbReference>
<dbReference type="GO" id="GO:0006412">
    <property type="term" value="P:translation"/>
    <property type="evidence" value="ECO:0007669"/>
    <property type="project" value="UniProtKB-UniRule"/>
</dbReference>
<dbReference type="HAMAP" id="MF_01363">
    <property type="entry name" value="Ribosomal_bL21"/>
    <property type="match status" value="1"/>
</dbReference>
<dbReference type="InterPro" id="IPR028909">
    <property type="entry name" value="bL21-like"/>
</dbReference>
<dbReference type="InterPro" id="IPR036164">
    <property type="entry name" value="bL21-like_sf"/>
</dbReference>
<dbReference type="InterPro" id="IPR001787">
    <property type="entry name" value="Ribosomal_bL21"/>
</dbReference>
<dbReference type="InterPro" id="IPR018258">
    <property type="entry name" value="Ribosomal_bL21_CS"/>
</dbReference>
<dbReference type="NCBIfam" id="TIGR00061">
    <property type="entry name" value="L21"/>
    <property type="match status" value="1"/>
</dbReference>
<dbReference type="PANTHER" id="PTHR21349">
    <property type="entry name" value="50S RIBOSOMAL PROTEIN L21"/>
    <property type="match status" value="1"/>
</dbReference>
<dbReference type="PANTHER" id="PTHR21349:SF0">
    <property type="entry name" value="LARGE RIBOSOMAL SUBUNIT PROTEIN BL21M"/>
    <property type="match status" value="1"/>
</dbReference>
<dbReference type="Pfam" id="PF00829">
    <property type="entry name" value="Ribosomal_L21p"/>
    <property type="match status" value="1"/>
</dbReference>
<dbReference type="SUPFAM" id="SSF141091">
    <property type="entry name" value="L21p-like"/>
    <property type="match status" value="1"/>
</dbReference>
<dbReference type="PROSITE" id="PS01169">
    <property type="entry name" value="RIBOSOMAL_L21"/>
    <property type="match status" value="1"/>
</dbReference>
<feature type="chain" id="PRO_1000143769" description="Large ribosomal subunit protein bL21">
    <location>
        <begin position="1"/>
        <end position="96"/>
    </location>
</feature>
<protein>
    <recommendedName>
        <fullName evidence="1">Large ribosomal subunit protein bL21</fullName>
    </recommendedName>
    <alternativeName>
        <fullName evidence="2">50S ribosomal protein L21</fullName>
    </alternativeName>
</protein>
<evidence type="ECO:0000255" key="1">
    <source>
        <dbReference type="HAMAP-Rule" id="MF_01363"/>
    </source>
</evidence>
<evidence type="ECO:0000305" key="2"/>
<organism>
    <name type="scientific">Chlorobium phaeobacteroides (strain BS1)</name>
    <dbReference type="NCBI Taxonomy" id="331678"/>
    <lineage>
        <taxon>Bacteria</taxon>
        <taxon>Pseudomonadati</taxon>
        <taxon>Chlorobiota</taxon>
        <taxon>Chlorobiia</taxon>
        <taxon>Chlorobiales</taxon>
        <taxon>Chlorobiaceae</taxon>
        <taxon>Chlorobium/Pelodictyon group</taxon>
        <taxon>Chlorobium</taxon>
    </lineage>
</organism>
<comment type="function">
    <text evidence="1">This protein binds to 23S rRNA in the presence of protein L20.</text>
</comment>
<comment type="subunit">
    <text evidence="1">Part of the 50S ribosomal subunit. Contacts protein L20.</text>
</comment>
<comment type="similarity">
    <text evidence="1">Belongs to the bacterial ribosomal protein bL21 family.</text>
</comment>
<accession>B3EP08</accession>